<evidence type="ECO:0000255" key="1">
    <source>
        <dbReference type="HAMAP-Rule" id="MF_01830"/>
    </source>
</evidence>
<gene>
    <name type="ordered locus">Bphyt_4813</name>
</gene>
<sequence length="259" mass="28636">MSYTPSEFRQQIRSRRLSGPTAGYCGDYAQANLAILPKQHADDFLRFCTLNPKACPLLGIGEPGDWRVPALGADLDIRNDVPAFYVYRHGERAEEVRSLDELWRDDLVVFAIGCSFSFEEMLRREGIALRHIEQQVNVPMYRTRERNVAAGVFGGNRVVSMRPMKAADAIRAIQITSRFPAVHGAPVHIGDPSLIGIRDLASPDFGDAVEVRSDELPVFWACGVTPQAAIESARLPFAIAHKPGHMLVTDIPNTTLAVL</sequence>
<feature type="chain" id="PRO_0000379829" description="Putative hydro-lyase Bphyt_4813">
    <location>
        <begin position="1"/>
        <end position="259"/>
    </location>
</feature>
<dbReference type="EC" id="4.2.1.-" evidence="1"/>
<dbReference type="EMBL" id="CP001053">
    <property type="protein sequence ID" value="ACD19178.1"/>
    <property type="molecule type" value="Genomic_DNA"/>
</dbReference>
<dbReference type="RefSeq" id="WP_012426690.1">
    <property type="nucleotide sequence ID" value="NC_010676.1"/>
</dbReference>
<dbReference type="SMR" id="B2TBH5"/>
<dbReference type="STRING" id="398527.Bphyt_4813"/>
<dbReference type="KEGG" id="bpy:Bphyt_4813"/>
<dbReference type="eggNOG" id="COG4336">
    <property type="taxonomic scope" value="Bacteria"/>
</dbReference>
<dbReference type="HOGENOM" id="CLU_059759_0_0_4"/>
<dbReference type="OrthoDB" id="149585at2"/>
<dbReference type="Proteomes" id="UP000001739">
    <property type="component" value="Chromosome 2"/>
</dbReference>
<dbReference type="GO" id="GO:0016829">
    <property type="term" value="F:lyase activity"/>
    <property type="evidence" value="ECO:0007669"/>
    <property type="project" value="UniProtKB-KW"/>
</dbReference>
<dbReference type="FunFam" id="3.30.2040.10:FF:000001">
    <property type="entry name" value="D-glutamate cyclase, mitochondrial"/>
    <property type="match status" value="1"/>
</dbReference>
<dbReference type="Gene3D" id="3.40.1640.10">
    <property type="entry name" value="PSTPO5379-like"/>
    <property type="match status" value="1"/>
</dbReference>
<dbReference type="Gene3D" id="3.30.2040.10">
    <property type="entry name" value="PSTPO5379-like domain"/>
    <property type="match status" value="1"/>
</dbReference>
<dbReference type="HAMAP" id="MF_01830">
    <property type="entry name" value="Hydro_lyase"/>
    <property type="match status" value="1"/>
</dbReference>
<dbReference type="InterPro" id="IPR009906">
    <property type="entry name" value="D-Glu_cyclase"/>
</dbReference>
<dbReference type="InterPro" id="IPR038021">
    <property type="entry name" value="Putative_hydro-lyase"/>
</dbReference>
<dbReference type="InterPro" id="IPR016938">
    <property type="entry name" value="UPF0317"/>
</dbReference>
<dbReference type="NCBIfam" id="NF003969">
    <property type="entry name" value="PRK05463.1"/>
    <property type="match status" value="1"/>
</dbReference>
<dbReference type="PANTHER" id="PTHR32022">
    <property type="entry name" value="D-GLUTAMATE CYCLASE, MITOCHONDRIAL"/>
    <property type="match status" value="1"/>
</dbReference>
<dbReference type="PANTHER" id="PTHR32022:SF10">
    <property type="entry name" value="D-GLUTAMATE CYCLASE, MITOCHONDRIAL"/>
    <property type="match status" value="1"/>
</dbReference>
<dbReference type="Pfam" id="PF07286">
    <property type="entry name" value="D-Glu_cyclase"/>
    <property type="match status" value="1"/>
</dbReference>
<dbReference type="PIRSF" id="PIRSF029755">
    <property type="entry name" value="UCP029755"/>
    <property type="match status" value="1"/>
</dbReference>
<dbReference type="SUPFAM" id="SSF160920">
    <property type="entry name" value="PSTPO5379-like"/>
    <property type="match status" value="1"/>
</dbReference>
<protein>
    <recommendedName>
        <fullName evidence="1">Putative hydro-lyase Bphyt_4813</fullName>
        <ecNumber evidence="1">4.2.1.-</ecNumber>
    </recommendedName>
</protein>
<accession>B2TBH5</accession>
<comment type="similarity">
    <text evidence="1">Belongs to the D-glutamate cyclase family.</text>
</comment>
<reference key="1">
    <citation type="journal article" date="2011" name="J. Bacteriol.">
        <title>Complete genome sequence of the plant growth-promoting endophyte Burkholderia phytofirmans strain PsJN.</title>
        <authorList>
            <person name="Weilharter A."/>
            <person name="Mitter B."/>
            <person name="Shin M.V."/>
            <person name="Chain P.S."/>
            <person name="Nowak J."/>
            <person name="Sessitsch A."/>
        </authorList>
    </citation>
    <scope>NUCLEOTIDE SEQUENCE [LARGE SCALE GENOMIC DNA]</scope>
    <source>
        <strain>DSM 17436 / LMG 22146 / PsJN</strain>
    </source>
</reference>
<proteinExistence type="inferred from homology"/>
<organism>
    <name type="scientific">Paraburkholderia phytofirmans (strain DSM 17436 / LMG 22146 / PsJN)</name>
    <name type="common">Burkholderia phytofirmans</name>
    <dbReference type="NCBI Taxonomy" id="398527"/>
    <lineage>
        <taxon>Bacteria</taxon>
        <taxon>Pseudomonadati</taxon>
        <taxon>Pseudomonadota</taxon>
        <taxon>Betaproteobacteria</taxon>
        <taxon>Burkholderiales</taxon>
        <taxon>Burkholderiaceae</taxon>
        <taxon>Paraburkholderia</taxon>
    </lineage>
</organism>
<keyword id="KW-0456">Lyase</keyword>
<name>Y4813_PARPJ</name>